<comment type="function">
    <text evidence="1">Component of the A-type ATP synthase that produces ATP from ADP in the presence of a proton gradient across the membrane.</text>
</comment>
<comment type="subunit">
    <text evidence="1">Has multiple subunits with at least A(3), B(3), C, D, E, F, H, I and proteolipid K(x).</text>
</comment>
<comment type="subcellular location">
    <subcellularLocation>
        <location evidence="1">Cell membrane</location>
        <topology evidence="1">Peripheral membrane protein</topology>
    </subcellularLocation>
</comment>
<comment type="similarity">
    <text evidence="1">Belongs to the V-ATPase D subunit family.</text>
</comment>
<feature type="chain" id="PRO_0000144256" description="A-type ATP synthase subunit D">
    <location>
        <begin position="1"/>
        <end position="214"/>
    </location>
</feature>
<organism>
    <name type="scientific">Pyrococcus horikoshii (strain ATCC 700860 / DSM 12428 / JCM 9974 / NBRC 100139 / OT-3)</name>
    <dbReference type="NCBI Taxonomy" id="70601"/>
    <lineage>
        <taxon>Archaea</taxon>
        <taxon>Methanobacteriati</taxon>
        <taxon>Methanobacteriota</taxon>
        <taxon>Thermococci</taxon>
        <taxon>Thermococcales</taxon>
        <taxon>Thermococcaceae</taxon>
        <taxon>Pyrococcus</taxon>
    </lineage>
</organism>
<name>AATD_PYRHO</name>
<reference key="1">
    <citation type="journal article" date="1998" name="DNA Res.">
        <title>Complete sequence and gene organization of the genome of a hyper-thermophilic archaebacterium, Pyrococcus horikoshii OT3.</title>
        <authorList>
            <person name="Kawarabayasi Y."/>
            <person name="Sawada M."/>
            <person name="Horikawa H."/>
            <person name="Haikawa Y."/>
            <person name="Hino Y."/>
            <person name="Yamamoto S."/>
            <person name="Sekine M."/>
            <person name="Baba S."/>
            <person name="Kosugi H."/>
            <person name="Hosoyama A."/>
            <person name="Nagai Y."/>
            <person name="Sakai M."/>
            <person name="Ogura K."/>
            <person name="Otsuka R."/>
            <person name="Nakazawa H."/>
            <person name="Takamiya M."/>
            <person name="Ohfuku Y."/>
            <person name="Funahashi T."/>
            <person name="Tanaka T."/>
            <person name="Kudoh Y."/>
            <person name="Yamazaki J."/>
            <person name="Kushida N."/>
            <person name="Oguchi A."/>
            <person name="Aoki K."/>
            <person name="Yoshizawa T."/>
            <person name="Nakamura Y."/>
            <person name="Robb F.T."/>
            <person name="Horikoshi K."/>
            <person name="Masuchi Y."/>
            <person name="Shizuya H."/>
            <person name="Kikuchi H."/>
        </authorList>
    </citation>
    <scope>NUCLEOTIDE SEQUENCE [LARGE SCALE GENOMIC DNA]</scope>
    <source>
        <strain>ATCC 700860 / DSM 12428 / JCM 9974 / NBRC 100139 / OT-3</strain>
    </source>
</reference>
<dbReference type="EMBL" id="BA000001">
    <property type="protein sequence ID" value="BAA31099.1"/>
    <property type="molecule type" value="Genomic_DNA"/>
</dbReference>
<dbReference type="PIR" id="D71213">
    <property type="entry name" value="D71213"/>
</dbReference>
<dbReference type="RefSeq" id="WP_010886036.1">
    <property type="nucleotide sequence ID" value="NC_000961.1"/>
</dbReference>
<dbReference type="SMR" id="O57731"/>
<dbReference type="STRING" id="70601.gene:9378985"/>
<dbReference type="EnsemblBacteria" id="BAA31099">
    <property type="protein sequence ID" value="BAA31099"/>
    <property type="gene ID" value="BAA31099"/>
</dbReference>
<dbReference type="GeneID" id="1442818"/>
<dbReference type="KEGG" id="pho:PH1972"/>
<dbReference type="eggNOG" id="arCOG04101">
    <property type="taxonomic scope" value="Archaea"/>
</dbReference>
<dbReference type="OrthoDB" id="117390at2157"/>
<dbReference type="Proteomes" id="UP000000752">
    <property type="component" value="Chromosome"/>
</dbReference>
<dbReference type="GO" id="GO:0005886">
    <property type="term" value="C:plasma membrane"/>
    <property type="evidence" value="ECO:0007669"/>
    <property type="project" value="UniProtKB-SubCell"/>
</dbReference>
<dbReference type="GO" id="GO:0005524">
    <property type="term" value="F:ATP binding"/>
    <property type="evidence" value="ECO:0007669"/>
    <property type="project" value="UniProtKB-UniRule"/>
</dbReference>
<dbReference type="GO" id="GO:0046933">
    <property type="term" value="F:proton-transporting ATP synthase activity, rotational mechanism"/>
    <property type="evidence" value="ECO:0007669"/>
    <property type="project" value="UniProtKB-UniRule"/>
</dbReference>
<dbReference type="GO" id="GO:0046961">
    <property type="term" value="F:proton-transporting ATPase activity, rotational mechanism"/>
    <property type="evidence" value="ECO:0007669"/>
    <property type="project" value="InterPro"/>
</dbReference>
<dbReference type="GO" id="GO:0042777">
    <property type="term" value="P:proton motive force-driven plasma membrane ATP synthesis"/>
    <property type="evidence" value="ECO:0007669"/>
    <property type="project" value="UniProtKB-UniRule"/>
</dbReference>
<dbReference type="FunFam" id="1.10.287.3240:FF:000007">
    <property type="entry name" value="V-type ATP synthase subunit D"/>
    <property type="match status" value="1"/>
</dbReference>
<dbReference type="Gene3D" id="1.10.287.3240">
    <property type="match status" value="1"/>
</dbReference>
<dbReference type="HAMAP" id="MF_00271">
    <property type="entry name" value="ATP_synth_D_arch"/>
    <property type="match status" value="1"/>
</dbReference>
<dbReference type="InterPro" id="IPR002699">
    <property type="entry name" value="V_ATPase_D"/>
</dbReference>
<dbReference type="NCBIfam" id="NF001545">
    <property type="entry name" value="PRK00373.1-4"/>
    <property type="match status" value="1"/>
</dbReference>
<dbReference type="NCBIfam" id="TIGR00309">
    <property type="entry name" value="V_ATPase_subD"/>
    <property type="match status" value="1"/>
</dbReference>
<dbReference type="PANTHER" id="PTHR11671">
    <property type="entry name" value="V-TYPE ATP SYNTHASE SUBUNIT D"/>
    <property type="match status" value="1"/>
</dbReference>
<dbReference type="Pfam" id="PF01813">
    <property type="entry name" value="ATP-synt_D"/>
    <property type="match status" value="1"/>
</dbReference>
<evidence type="ECO:0000255" key="1">
    <source>
        <dbReference type="HAMAP-Rule" id="MF_00271"/>
    </source>
</evidence>
<accession>O57731</accession>
<proteinExistence type="inferred from homology"/>
<keyword id="KW-0066">ATP synthesis</keyword>
<keyword id="KW-1003">Cell membrane</keyword>
<keyword id="KW-0375">Hydrogen ion transport</keyword>
<keyword id="KW-0406">Ion transport</keyword>
<keyword id="KW-0472">Membrane</keyword>
<keyword id="KW-0813">Transport</keyword>
<sequence length="214" mass="25204">MPEILKIKPTRMELLKLKRRVKLAERGHKLLKEKQDALIMEFFTIYDEALSLRRELIRKMEEAFNSLRRAQVDVGALRLKEIAIGVKPNKEIEIKTRNIMGVRVPLIEVPELKRKASERGYAFVSTTSTVDMAAEKFEEVLELAIRLAEVEESLKRLGKEIEKTKRRVNALEYIIIPRMENTIKFIEQHLDEMERENFFRLKRVKAILEARQSM</sequence>
<protein>
    <recommendedName>
        <fullName evidence="1">A-type ATP synthase subunit D</fullName>
    </recommendedName>
</protein>
<gene>
    <name evidence="1" type="primary">atpD</name>
    <name type="ordered locus">PH1972</name>
</gene>